<name>PGP_PYRIL</name>
<proteinExistence type="inferred from homology"/>
<organism>
    <name type="scientific">Pyrobaculum islandicum (strain DSM 4184 / JCM 9189 / GEO3)</name>
    <dbReference type="NCBI Taxonomy" id="384616"/>
    <lineage>
        <taxon>Archaea</taxon>
        <taxon>Thermoproteota</taxon>
        <taxon>Thermoprotei</taxon>
        <taxon>Thermoproteales</taxon>
        <taxon>Thermoproteaceae</taxon>
        <taxon>Pyrobaculum</taxon>
    </lineage>
</organism>
<protein>
    <recommendedName>
        <fullName evidence="1">Phosphoglycolate phosphatase</fullName>
        <shortName evidence="1">PGP</shortName>
        <shortName evidence="1">PGPase</shortName>
        <ecNumber evidence="1">3.1.3.18</ecNumber>
    </recommendedName>
</protein>
<sequence>MKCKILVADLDGTLTLSRNTYELSVEALLALRKARDSGLRVVLATANGLDFALTIARYLGVRDVIAENGCLIHLDGVTYELCSGDMSIVDKVIISTGAVIPSPQNRCRKYDMAYIPLVKDTLEKVRAVVGTGYIVESSGYAIHVRPAGVDKGVAVSWLCRKLDVSCHQVATVGDSDVDVGMLSIAWGIAVGNATEAAKKAARVVVEEPSGLGFKEAVNLILSGDACTP</sequence>
<reference key="1">
    <citation type="submission" date="2006-12" db="EMBL/GenBank/DDBJ databases">
        <title>Complete sequence of Pyrobaculum islandicum DSM 4184.</title>
        <authorList>
            <person name="Copeland A."/>
            <person name="Lucas S."/>
            <person name="Lapidus A."/>
            <person name="Barry K."/>
            <person name="Detter J.C."/>
            <person name="Glavina del Rio T."/>
            <person name="Dalin E."/>
            <person name="Tice H."/>
            <person name="Pitluck S."/>
            <person name="Meincke L."/>
            <person name="Brettin T."/>
            <person name="Bruce D."/>
            <person name="Han C."/>
            <person name="Tapia R."/>
            <person name="Gilna P."/>
            <person name="Schmutz J."/>
            <person name="Larimer F."/>
            <person name="Land M."/>
            <person name="Hauser L."/>
            <person name="Kyrpides N."/>
            <person name="Mikhailova N."/>
            <person name="Cozen A.E."/>
            <person name="Fitz-Gibbon S.T."/>
            <person name="House C.H."/>
            <person name="Saltikov C."/>
            <person name="Lowe T."/>
            <person name="Richardson P."/>
        </authorList>
    </citation>
    <scope>NUCLEOTIDE SEQUENCE [LARGE SCALE GENOMIC DNA]</scope>
    <source>
        <strain>DSM 4184 / JCM 9189 / GEO3</strain>
    </source>
</reference>
<keyword id="KW-0119">Carbohydrate metabolism</keyword>
<keyword id="KW-0378">Hydrolase</keyword>
<keyword id="KW-0460">Magnesium</keyword>
<keyword id="KW-0479">Metal-binding</keyword>
<accession>A1RSN2</accession>
<comment type="function">
    <text evidence="1">Catalyzes the dephosphorylation of 2-phosphoglycolate.</text>
</comment>
<comment type="catalytic activity">
    <reaction evidence="1">
        <text>2-phosphoglycolate + H2O = glycolate + phosphate</text>
        <dbReference type="Rhea" id="RHEA:14369"/>
        <dbReference type="ChEBI" id="CHEBI:15377"/>
        <dbReference type="ChEBI" id="CHEBI:29805"/>
        <dbReference type="ChEBI" id="CHEBI:43474"/>
        <dbReference type="ChEBI" id="CHEBI:58033"/>
        <dbReference type="EC" id="3.1.3.18"/>
    </reaction>
</comment>
<comment type="cofactor">
    <cofactor evidence="1">
        <name>Mg(2+)</name>
        <dbReference type="ChEBI" id="CHEBI:18420"/>
    </cofactor>
</comment>
<comment type="similarity">
    <text evidence="1">Belongs to the archaeal SPP-like hydrolase family.</text>
</comment>
<gene>
    <name type="ordered locus">Pisl_0788</name>
</gene>
<dbReference type="EC" id="3.1.3.18" evidence="1"/>
<dbReference type="EMBL" id="CP000504">
    <property type="protein sequence ID" value="ABL87964.1"/>
    <property type="molecule type" value="Genomic_DNA"/>
</dbReference>
<dbReference type="RefSeq" id="WP_011762540.1">
    <property type="nucleotide sequence ID" value="NC_008701.1"/>
</dbReference>
<dbReference type="SMR" id="A1RSN2"/>
<dbReference type="STRING" id="384616.Pisl_0788"/>
<dbReference type="GeneID" id="4617100"/>
<dbReference type="KEGG" id="pis:Pisl_0788"/>
<dbReference type="eggNOG" id="arCOG01213">
    <property type="taxonomic scope" value="Archaea"/>
</dbReference>
<dbReference type="HOGENOM" id="CLU_044146_2_0_2"/>
<dbReference type="OrthoDB" id="120822at2157"/>
<dbReference type="Proteomes" id="UP000002595">
    <property type="component" value="Chromosome"/>
</dbReference>
<dbReference type="GO" id="GO:0005829">
    <property type="term" value="C:cytosol"/>
    <property type="evidence" value="ECO:0007669"/>
    <property type="project" value="TreeGrafter"/>
</dbReference>
<dbReference type="GO" id="GO:0000287">
    <property type="term" value="F:magnesium ion binding"/>
    <property type="evidence" value="ECO:0007669"/>
    <property type="project" value="InterPro"/>
</dbReference>
<dbReference type="GO" id="GO:0008967">
    <property type="term" value="F:phosphoglycolate phosphatase activity"/>
    <property type="evidence" value="ECO:0007669"/>
    <property type="project" value="UniProtKB-UniRule"/>
</dbReference>
<dbReference type="Gene3D" id="3.90.1070.10">
    <property type="match status" value="1"/>
</dbReference>
<dbReference type="Gene3D" id="3.40.50.1000">
    <property type="entry name" value="HAD superfamily/HAD-like"/>
    <property type="match status" value="1"/>
</dbReference>
<dbReference type="HAMAP" id="MF_01419">
    <property type="entry name" value="GPH_hydrolase_arch"/>
    <property type="match status" value="1"/>
</dbReference>
<dbReference type="InterPro" id="IPR036412">
    <property type="entry name" value="HAD-like_sf"/>
</dbReference>
<dbReference type="InterPro" id="IPR023214">
    <property type="entry name" value="HAD_sf"/>
</dbReference>
<dbReference type="InterPro" id="IPR006382">
    <property type="entry name" value="PGPase"/>
</dbReference>
<dbReference type="NCBIfam" id="TIGR01487">
    <property type="entry name" value="Pglycolate_arch"/>
    <property type="match status" value="1"/>
</dbReference>
<dbReference type="PANTHER" id="PTHR10000:SF8">
    <property type="entry name" value="HAD SUPERFAMILY HYDROLASE-LIKE, TYPE 3"/>
    <property type="match status" value="1"/>
</dbReference>
<dbReference type="PANTHER" id="PTHR10000">
    <property type="entry name" value="PHOSPHOSERINE PHOSPHATASE"/>
    <property type="match status" value="1"/>
</dbReference>
<dbReference type="Pfam" id="PF08282">
    <property type="entry name" value="Hydrolase_3"/>
    <property type="match status" value="2"/>
</dbReference>
<dbReference type="SUPFAM" id="SSF56784">
    <property type="entry name" value="HAD-like"/>
    <property type="match status" value="1"/>
</dbReference>
<feature type="chain" id="PRO_1000024294" description="Phosphoglycolate phosphatase">
    <location>
        <begin position="1"/>
        <end position="228"/>
    </location>
</feature>
<feature type="active site" description="Nucleophile" evidence="1">
    <location>
        <position position="9"/>
    </location>
</feature>
<feature type="binding site" evidence="1">
    <location>
        <position position="9"/>
    </location>
    <ligand>
        <name>Mg(2+)</name>
        <dbReference type="ChEBI" id="CHEBI:18420"/>
    </ligand>
</feature>
<feature type="binding site" evidence="1">
    <location>
        <position position="11"/>
    </location>
    <ligand>
        <name>Mg(2+)</name>
        <dbReference type="ChEBI" id="CHEBI:18420"/>
    </ligand>
</feature>
<feature type="binding site" evidence="1">
    <location>
        <position position="151"/>
    </location>
    <ligand>
        <name>substrate</name>
    </ligand>
</feature>
<feature type="binding site" evidence="1">
    <location>
        <position position="174"/>
    </location>
    <ligand>
        <name>Mg(2+)</name>
        <dbReference type="ChEBI" id="CHEBI:18420"/>
    </ligand>
</feature>
<feature type="binding site" evidence="1">
    <location>
        <position position="178"/>
    </location>
    <ligand>
        <name>Mg(2+)</name>
        <dbReference type="ChEBI" id="CHEBI:18420"/>
    </ligand>
</feature>
<evidence type="ECO:0000255" key="1">
    <source>
        <dbReference type="HAMAP-Rule" id="MF_01419"/>
    </source>
</evidence>